<proteinExistence type="evidence at protein level"/>
<gene>
    <name type="primary">RPL18A</name>
    <name evidence="2" type="ordered locus">Os01g0752300</name>
    <name evidence="1" type="ordered locus">LOC_Os01g54870</name>
    <name evidence="3" type="ORF">OsJ_03475</name>
    <name type="ORF">P0046E05.38</name>
    <name type="ORF">P0435B05.19</name>
</gene>
<protein>
    <recommendedName>
        <fullName evidence="1">Large ribosomal subunit protein eL20</fullName>
    </recommendedName>
    <alternativeName>
        <fullName>60S ribosomal protein L18a</fullName>
    </alternativeName>
</protein>
<accession>Q943F3</accession>
<accession>A0A0P0V8B3</accession>
<accession>Q0JJA0</accession>
<sequence>MGAFRFHQYQVVGRGLPTPTDEHPKIYRMKLWATNEVRAKSKFWYFLRKLKKVKKSNGQILAINEIFEKNPTTIKNYGIWLRYQSRTGYHNMYKEYRDTTLNGAVEQMYTEMASRHRVRFPCIQIIKTATVHFKLCKRDNTKQFHKSDIKFPLVYRKVRPPTRKLKTTFKASRPNLFM</sequence>
<name>RL18A_ORYSJ</name>
<feature type="chain" id="PRO_0000213937" description="Large ribosomal subunit protein eL20">
    <location>
        <begin position="1"/>
        <end position="178"/>
    </location>
</feature>
<feature type="sequence conflict" description="In Ref. 6; AK121755." evidence="1" ref="6">
    <original>P</original>
    <variation>R</variation>
    <location>
        <position position="19"/>
    </location>
</feature>
<evidence type="ECO:0000305" key="1"/>
<evidence type="ECO:0000312" key="2">
    <source>
        <dbReference type="EMBL" id="BAF06178.1"/>
    </source>
</evidence>
<evidence type="ECO:0000312" key="3">
    <source>
        <dbReference type="EMBL" id="EAZ13560.1"/>
    </source>
</evidence>
<comment type="similarity">
    <text evidence="1">Belongs to the eukaryotic ribosomal protein eL20 family.</text>
</comment>
<organism>
    <name type="scientific">Oryza sativa subsp. japonica</name>
    <name type="common">Rice</name>
    <dbReference type="NCBI Taxonomy" id="39947"/>
    <lineage>
        <taxon>Eukaryota</taxon>
        <taxon>Viridiplantae</taxon>
        <taxon>Streptophyta</taxon>
        <taxon>Embryophyta</taxon>
        <taxon>Tracheophyta</taxon>
        <taxon>Spermatophyta</taxon>
        <taxon>Magnoliopsida</taxon>
        <taxon>Liliopsida</taxon>
        <taxon>Poales</taxon>
        <taxon>Poaceae</taxon>
        <taxon>BOP clade</taxon>
        <taxon>Oryzoideae</taxon>
        <taxon>Oryzeae</taxon>
        <taxon>Oryzinae</taxon>
        <taxon>Oryza</taxon>
        <taxon>Oryza sativa</taxon>
    </lineage>
</organism>
<dbReference type="EMBL" id="AP003237">
    <property type="protein sequence ID" value="BAB67920.1"/>
    <property type="molecule type" value="Genomic_DNA"/>
</dbReference>
<dbReference type="EMBL" id="AP003249">
    <property type="protein sequence ID" value="BAB89536.1"/>
    <property type="molecule type" value="Genomic_DNA"/>
</dbReference>
<dbReference type="EMBL" id="AP008207">
    <property type="protein sequence ID" value="BAF06178.1"/>
    <property type="molecule type" value="Genomic_DNA"/>
</dbReference>
<dbReference type="EMBL" id="AP014957">
    <property type="protein sequence ID" value="BAS74372.1"/>
    <property type="molecule type" value="Genomic_DNA"/>
</dbReference>
<dbReference type="EMBL" id="CM000138">
    <property type="protein sequence ID" value="EAZ13560.1"/>
    <property type="molecule type" value="Genomic_DNA"/>
</dbReference>
<dbReference type="EMBL" id="AK121755">
    <property type="status" value="NOT_ANNOTATED_CDS"/>
    <property type="molecule type" value="mRNA"/>
</dbReference>
<dbReference type="RefSeq" id="XP_015621966.1">
    <property type="nucleotide sequence ID" value="XM_015766480.1"/>
</dbReference>
<dbReference type="PDB" id="4V6I">
    <property type="method" value="EM"/>
    <property type="resolution" value="8.80 A"/>
    <property type="chains" value="BS=1-167"/>
</dbReference>
<dbReference type="PDBsum" id="4V6I"/>
<dbReference type="SMR" id="Q943F3"/>
<dbReference type="FunCoup" id="Q943F3">
    <property type="interactions" value="2393"/>
</dbReference>
<dbReference type="STRING" id="39947.Q943F3"/>
<dbReference type="PaxDb" id="39947-Q943F3"/>
<dbReference type="EnsemblPlants" id="Os01t0752300-01">
    <property type="protein sequence ID" value="Os01t0752300-01"/>
    <property type="gene ID" value="Os01g0752300"/>
</dbReference>
<dbReference type="Gramene" id="Os01t0752300-01">
    <property type="protein sequence ID" value="Os01t0752300-01"/>
    <property type="gene ID" value="Os01g0752300"/>
</dbReference>
<dbReference type="KEGG" id="dosa:Os01g0752300"/>
<dbReference type="eggNOG" id="KOG0829">
    <property type="taxonomic scope" value="Eukaryota"/>
</dbReference>
<dbReference type="HOGENOM" id="CLU_080773_1_1_1"/>
<dbReference type="InParanoid" id="Q943F3"/>
<dbReference type="OMA" id="PNELCKR"/>
<dbReference type="OrthoDB" id="723469at2759"/>
<dbReference type="Proteomes" id="UP000000763">
    <property type="component" value="Chromosome 1"/>
</dbReference>
<dbReference type="Proteomes" id="UP000007752">
    <property type="component" value="Chromosome 1"/>
</dbReference>
<dbReference type="Proteomes" id="UP000059680">
    <property type="component" value="Chromosome 1"/>
</dbReference>
<dbReference type="GO" id="GO:0022625">
    <property type="term" value="C:cytosolic large ribosomal subunit"/>
    <property type="evidence" value="ECO:0000318"/>
    <property type="project" value="GO_Central"/>
</dbReference>
<dbReference type="GO" id="GO:0003735">
    <property type="term" value="F:structural constituent of ribosome"/>
    <property type="evidence" value="ECO:0000318"/>
    <property type="project" value="GO_Central"/>
</dbReference>
<dbReference type="GO" id="GO:0002181">
    <property type="term" value="P:cytoplasmic translation"/>
    <property type="evidence" value="ECO:0000318"/>
    <property type="project" value="GO_Central"/>
</dbReference>
<dbReference type="FunFam" id="3.10.20.10:FF:000001">
    <property type="entry name" value="60S ribosomal protein L18a"/>
    <property type="match status" value="1"/>
</dbReference>
<dbReference type="FunFam" id="3.10.20.10:FF:000002">
    <property type="entry name" value="60S ribosomal protein L18a"/>
    <property type="match status" value="1"/>
</dbReference>
<dbReference type="Gene3D" id="3.10.20.10">
    <property type="match status" value="2"/>
</dbReference>
<dbReference type="HAMAP" id="MF_00273">
    <property type="entry name" value="Ribosomal_eL20"/>
    <property type="match status" value="1"/>
</dbReference>
<dbReference type="InterPro" id="IPR028877">
    <property type="entry name" value="Ribosomal_eL20"/>
</dbReference>
<dbReference type="InterPro" id="IPR023573">
    <property type="entry name" value="Ribosomal_eL20_dom"/>
</dbReference>
<dbReference type="InterPro" id="IPR021138">
    <property type="entry name" value="Ribosomal_eL20_eukaryotes"/>
</dbReference>
<dbReference type="PANTHER" id="PTHR10052">
    <property type="entry name" value="60S RIBOSOMAL PROTEIN L18A"/>
    <property type="match status" value="1"/>
</dbReference>
<dbReference type="Pfam" id="PF01775">
    <property type="entry name" value="Ribosomal_L18A"/>
    <property type="match status" value="1"/>
</dbReference>
<dbReference type="PIRSF" id="PIRSF002190">
    <property type="entry name" value="Ribosomal_L18a"/>
    <property type="match status" value="1"/>
</dbReference>
<dbReference type="SUPFAM" id="SSF160374">
    <property type="entry name" value="RplX-like"/>
    <property type="match status" value="1"/>
</dbReference>
<reference key="1">
    <citation type="journal article" date="2002" name="Nature">
        <title>The genome sequence and structure of rice chromosome 1.</title>
        <authorList>
            <person name="Sasaki T."/>
            <person name="Matsumoto T."/>
            <person name="Yamamoto K."/>
            <person name="Sakata K."/>
            <person name="Baba T."/>
            <person name="Katayose Y."/>
            <person name="Wu J."/>
            <person name="Niimura Y."/>
            <person name="Cheng Z."/>
            <person name="Nagamura Y."/>
            <person name="Antonio B.A."/>
            <person name="Kanamori H."/>
            <person name="Hosokawa S."/>
            <person name="Masukawa M."/>
            <person name="Arikawa K."/>
            <person name="Chiden Y."/>
            <person name="Hayashi M."/>
            <person name="Okamoto M."/>
            <person name="Ando T."/>
            <person name="Aoki H."/>
            <person name="Arita K."/>
            <person name="Hamada M."/>
            <person name="Harada C."/>
            <person name="Hijishita S."/>
            <person name="Honda M."/>
            <person name="Ichikawa Y."/>
            <person name="Idonuma A."/>
            <person name="Iijima M."/>
            <person name="Ikeda M."/>
            <person name="Ikeno M."/>
            <person name="Ito S."/>
            <person name="Ito T."/>
            <person name="Ito Y."/>
            <person name="Ito Y."/>
            <person name="Iwabuchi A."/>
            <person name="Kamiya K."/>
            <person name="Karasawa W."/>
            <person name="Katagiri S."/>
            <person name="Kikuta A."/>
            <person name="Kobayashi N."/>
            <person name="Kono I."/>
            <person name="Machita K."/>
            <person name="Maehara T."/>
            <person name="Mizuno H."/>
            <person name="Mizubayashi T."/>
            <person name="Mukai Y."/>
            <person name="Nagasaki H."/>
            <person name="Nakashima M."/>
            <person name="Nakama Y."/>
            <person name="Nakamichi Y."/>
            <person name="Nakamura M."/>
            <person name="Namiki N."/>
            <person name="Negishi M."/>
            <person name="Ohta I."/>
            <person name="Ono N."/>
            <person name="Saji S."/>
            <person name="Sakai K."/>
            <person name="Shibata M."/>
            <person name="Shimokawa T."/>
            <person name="Shomura A."/>
            <person name="Song J."/>
            <person name="Takazaki Y."/>
            <person name="Terasawa K."/>
            <person name="Tsuji K."/>
            <person name="Waki K."/>
            <person name="Yamagata H."/>
            <person name="Yamane H."/>
            <person name="Yoshiki S."/>
            <person name="Yoshihara R."/>
            <person name="Yukawa K."/>
            <person name="Zhong H."/>
            <person name="Iwama H."/>
            <person name="Endo T."/>
            <person name="Ito H."/>
            <person name="Hahn J.H."/>
            <person name="Kim H.-I."/>
            <person name="Eun M.-Y."/>
            <person name="Yano M."/>
            <person name="Jiang J."/>
            <person name="Gojobori T."/>
        </authorList>
    </citation>
    <scope>NUCLEOTIDE SEQUENCE [LARGE SCALE GENOMIC DNA]</scope>
    <source>
        <strain>cv. Nipponbare</strain>
    </source>
</reference>
<reference key="2">
    <citation type="journal article" date="2005" name="Nature">
        <title>The map-based sequence of the rice genome.</title>
        <authorList>
            <consortium name="International rice genome sequencing project (IRGSP)"/>
        </authorList>
    </citation>
    <scope>NUCLEOTIDE SEQUENCE [LARGE SCALE GENOMIC DNA]</scope>
    <source>
        <strain>cv. Nipponbare</strain>
    </source>
</reference>
<reference key="3">
    <citation type="journal article" date="2008" name="Nucleic Acids Res.">
        <title>The rice annotation project database (RAP-DB): 2008 update.</title>
        <authorList>
            <consortium name="The rice annotation project (RAP)"/>
        </authorList>
    </citation>
    <scope>GENOME REANNOTATION</scope>
    <source>
        <strain>cv. Nipponbare</strain>
    </source>
</reference>
<reference key="4">
    <citation type="journal article" date="2013" name="Rice">
        <title>Improvement of the Oryza sativa Nipponbare reference genome using next generation sequence and optical map data.</title>
        <authorList>
            <person name="Kawahara Y."/>
            <person name="de la Bastide M."/>
            <person name="Hamilton J.P."/>
            <person name="Kanamori H."/>
            <person name="McCombie W.R."/>
            <person name="Ouyang S."/>
            <person name="Schwartz D.C."/>
            <person name="Tanaka T."/>
            <person name="Wu J."/>
            <person name="Zhou S."/>
            <person name="Childs K.L."/>
            <person name="Davidson R.M."/>
            <person name="Lin H."/>
            <person name="Quesada-Ocampo L."/>
            <person name="Vaillancourt B."/>
            <person name="Sakai H."/>
            <person name="Lee S.S."/>
            <person name="Kim J."/>
            <person name="Numa H."/>
            <person name="Itoh T."/>
            <person name="Buell C.R."/>
            <person name="Matsumoto T."/>
        </authorList>
    </citation>
    <scope>GENOME REANNOTATION</scope>
    <source>
        <strain>cv. Nipponbare</strain>
    </source>
</reference>
<reference key="5">
    <citation type="journal article" date="2005" name="PLoS Biol.">
        <title>The genomes of Oryza sativa: a history of duplications.</title>
        <authorList>
            <person name="Yu J."/>
            <person name="Wang J."/>
            <person name="Lin W."/>
            <person name="Li S."/>
            <person name="Li H."/>
            <person name="Zhou J."/>
            <person name="Ni P."/>
            <person name="Dong W."/>
            <person name="Hu S."/>
            <person name="Zeng C."/>
            <person name="Zhang J."/>
            <person name="Zhang Y."/>
            <person name="Li R."/>
            <person name="Xu Z."/>
            <person name="Li S."/>
            <person name="Li X."/>
            <person name="Zheng H."/>
            <person name="Cong L."/>
            <person name="Lin L."/>
            <person name="Yin J."/>
            <person name="Geng J."/>
            <person name="Li G."/>
            <person name="Shi J."/>
            <person name="Liu J."/>
            <person name="Lv H."/>
            <person name="Li J."/>
            <person name="Wang J."/>
            <person name="Deng Y."/>
            <person name="Ran L."/>
            <person name="Shi X."/>
            <person name="Wang X."/>
            <person name="Wu Q."/>
            <person name="Li C."/>
            <person name="Ren X."/>
            <person name="Wang J."/>
            <person name="Wang X."/>
            <person name="Li D."/>
            <person name="Liu D."/>
            <person name="Zhang X."/>
            <person name="Ji Z."/>
            <person name="Zhao W."/>
            <person name="Sun Y."/>
            <person name="Zhang Z."/>
            <person name="Bao J."/>
            <person name="Han Y."/>
            <person name="Dong L."/>
            <person name="Ji J."/>
            <person name="Chen P."/>
            <person name="Wu S."/>
            <person name="Liu J."/>
            <person name="Xiao Y."/>
            <person name="Bu D."/>
            <person name="Tan J."/>
            <person name="Yang L."/>
            <person name="Ye C."/>
            <person name="Zhang J."/>
            <person name="Xu J."/>
            <person name="Zhou Y."/>
            <person name="Yu Y."/>
            <person name="Zhang B."/>
            <person name="Zhuang S."/>
            <person name="Wei H."/>
            <person name="Liu B."/>
            <person name="Lei M."/>
            <person name="Yu H."/>
            <person name="Li Y."/>
            <person name="Xu H."/>
            <person name="Wei S."/>
            <person name="He X."/>
            <person name="Fang L."/>
            <person name="Zhang Z."/>
            <person name="Zhang Y."/>
            <person name="Huang X."/>
            <person name="Su Z."/>
            <person name="Tong W."/>
            <person name="Li J."/>
            <person name="Tong Z."/>
            <person name="Li S."/>
            <person name="Ye J."/>
            <person name="Wang L."/>
            <person name="Fang L."/>
            <person name="Lei T."/>
            <person name="Chen C.-S."/>
            <person name="Chen H.-C."/>
            <person name="Xu Z."/>
            <person name="Li H."/>
            <person name="Huang H."/>
            <person name="Zhang F."/>
            <person name="Xu H."/>
            <person name="Li N."/>
            <person name="Zhao C."/>
            <person name="Li S."/>
            <person name="Dong L."/>
            <person name="Huang Y."/>
            <person name="Li L."/>
            <person name="Xi Y."/>
            <person name="Qi Q."/>
            <person name="Li W."/>
            <person name="Zhang B."/>
            <person name="Hu W."/>
            <person name="Zhang Y."/>
            <person name="Tian X."/>
            <person name="Jiao Y."/>
            <person name="Liang X."/>
            <person name="Jin J."/>
            <person name="Gao L."/>
            <person name="Zheng W."/>
            <person name="Hao B."/>
            <person name="Liu S.-M."/>
            <person name="Wang W."/>
            <person name="Yuan L."/>
            <person name="Cao M."/>
            <person name="McDermott J."/>
            <person name="Samudrala R."/>
            <person name="Wang J."/>
            <person name="Wong G.K.-S."/>
            <person name="Yang H."/>
        </authorList>
    </citation>
    <scope>NUCLEOTIDE SEQUENCE [LARGE SCALE GENOMIC DNA]</scope>
    <source>
        <strain>cv. Nipponbare</strain>
    </source>
</reference>
<reference key="6">
    <citation type="journal article" date="2003" name="Science">
        <title>Collection, mapping, and annotation of over 28,000 cDNA clones from japonica rice.</title>
        <authorList>
            <consortium name="The rice full-length cDNA consortium"/>
        </authorList>
    </citation>
    <scope>NUCLEOTIDE SEQUENCE [LARGE SCALE MRNA]</scope>
    <source>
        <strain>cv. Nipponbare</strain>
    </source>
</reference>
<keyword id="KW-0002">3D-structure</keyword>
<keyword id="KW-1185">Reference proteome</keyword>
<keyword id="KW-0687">Ribonucleoprotein</keyword>
<keyword id="KW-0689">Ribosomal protein</keyword>